<sequence length="387" mass="42032">MTLAYNKRHQIVRPDSCLSVLQQRLKYARSELQESACYFVENVPVWPGAAAPTPFAASTDIFQHADCNGAPPLINTICARDNALYGLDLSDENFLVTNGGMHGLSLVFRQIKRRSAEAGSAVCLAPVFGAVPALLEATGYDLIYYQMSAAFPTVEEILAVCRADTRLVYLNFPHNPLGGIYSDAFIEQLVPSLAERGISLVLDMVYDSFIFDDQKIRSPFACTNDLSLLYTVNSVSKNYGSPGLRIGWVASSSDNVEAMAGMLEIECVAVCSPAQTKAASLISMGNAPLHQQVVSSRAIVREFLGRHLSRYASLPPAGTQVFVNLPVHDIEGFADQMLGEYGLVLATASNYSGAQGAHIRIPTGYPESITHNALELLRQGIERYADV</sequence>
<reference key="1">
    <citation type="journal article" date="2010" name="Appl. Environ. Microbiol.">
        <title>Identification of the biosynthetic gene cluster for 3-methylarginine, a toxin produced by Pseudomonas syringae pv. syringae 22d/93.</title>
        <authorList>
            <person name="Braun S.D."/>
            <person name="Hofmann J."/>
            <person name="Wensing A."/>
            <person name="Ullrich M.S."/>
            <person name="Weingart H."/>
            <person name="Volksch B."/>
            <person name="Spiteller D."/>
        </authorList>
    </citation>
    <scope>NUCLEOTIDE SEQUENCE [GENOMIC DNA]</scope>
    <scope>FUNCTION</scope>
    <source>
        <strain>22d/93</strain>
    </source>
</reference>
<gene>
    <name evidence="3" type="primary">mrsB</name>
</gene>
<organism>
    <name type="scientific">Pseudomonas syringae pv. syringae</name>
    <dbReference type="NCBI Taxonomy" id="321"/>
    <lineage>
        <taxon>Bacteria</taxon>
        <taxon>Pseudomonadati</taxon>
        <taxon>Pseudomonadota</taxon>
        <taxon>Gammaproteobacteria</taxon>
        <taxon>Pseudomonadales</taxon>
        <taxon>Pseudomonadaceae</taxon>
        <taxon>Pseudomonas</taxon>
        <taxon>Pseudomonas syringae</taxon>
    </lineage>
</organism>
<dbReference type="EC" id="2.6.1.126" evidence="5"/>
<dbReference type="EMBL" id="FJ788104">
    <property type="protein sequence ID" value="ACY54550.1"/>
    <property type="molecule type" value="Genomic_DNA"/>
</dbReference>
<dbReference type="SMR" id="D5FKJ2"/>
<dbReference type="GO" id="GO:0030170">
    <property type="term" value="F:pyridoxal phosphate binding"/>
    <property type="evidence" value="ECO:0007669"/>
    <property type="project" value="InterPro"/>
</dbReference>
<dbReference type="GO" id="GO:0008483">
    <property type="term" value="F:transaminase activity"/>
    <property type="evidence" value="ECO:0007669"/>
    <property type="project" value="UniProtKB-KW"/>
</dbReference>
<dbReference type="GO" id="GO:0006520">
    <property type="term" value="P:amino acid metabolic process"/>
    <property type="evidence" value="ECO:0007669"/>
    <property type="project" value="InterPro"/>
</dbReference>
<dbReference type="GO" id="GO:0009058">
    <property type="term" value="P:biosynthetic process"/>
    <property type="evidence" value="ECO:0007669"/>
    <property type="project" value="InterPro"/>
</dbReference>
<dbReference type="CDD" id="cd00609">
    <property type="entry name" value="AAT_like"/>
    <property type="match status" value="1"/>
</dbReference>
<dbReference type="Gene3D" id="3.40.640.10">
    <property type="entry name" value="Type I PLP-dependent aspartate aminotransferase-like (Major domain)"/>
    <property type="match status" value="1"/>
</dbReference>
<dbReference type="InterPro" id="IPR030898">
    <property type="entry name" value="3metArgNH2trans"/>
</dbReference>
<dbReference type="InterPro" id="IPR004839">
    <property type="entry name" value="Aminotransferase_I/II_large"/>
</dbReference>
<dbReference type="InterPro" id="IPR050596">
    <property type="entry name" value="AspAT/PAT-like"/>
</dbReference>
<dbReference type="InterPro" id="IPR015424">
    <property type="entry name" value="PyrdxlP-dep_Trfase"/>
</dbReference>
<dbReference type="InterPro" id="IPR015421">
    <property type="entry name" value="PyrdxlP-dep_Trfase_major"/>
</dbReference>
<dbReference type="NCBIfam" id="TIGR04544">
    <property type="entry name" value="3metArgNH2trans"/>
    <property type="match status" value="1"/>
</dbReference>
<dbReference type="PANTHER" id="PTHR46383">
    <property type="entry name" value="ASPARTATE AMINOTRANSFERASE"/>
    <property type="match status" value="1"/>
</dbReference>
<dbReference type="PANTHER" id="PTHR46383:SF1">
    <property type="entry name" value="ASPARTATE AMINOTRANSFERASE"/>
    <property type="match status" value="1"/>
</dbReference>
<dbReference type="Pfam" id="PF00155">
    <property type="entry name" value="Aminotran_1_2"/>
    <property type="match status" value="1"/>
</dbReference>
<dbReference type="SUPFAM" id="SSF53383">
    <property type="entry name" value="PLP-dependent transferases"/>
    <property type="match status" value="1"/>
</dbReference>
<keyword id="KW-0032">Aminotransferase</keyword>
<keyword id="KW-0663">Pyridoxal phosphate</keyword>
<keyword id="KW-0808">Transferase</keyword>
<feature type="chain" id="PRO_0000460725" description="L-aspartate:5-guanidino-3-methyl-2-oxopentanoate transaminase">
    <location>
        <begin position="1"/>
        <end position="387"/>
    </location>
</feature>
<feature type="modified residue" description="N6-(pyridoxal phosphate)lysine" evidence="1">
    <location>
        <position position="237"/>
    </location>
</feature>
<accession>D5FKJ2</accession>
<protein>
    <recommendedName>
        <fullName evidence="4">L-aspartate:5-guanidino-3-methyl-2-oxopentanoate transaminase</fullName>
        <ecNumber evidence="5">2.6.1.126</ecNumber>
    </recommendedName>
</protein>
<name>MRSB_PSESY</name>
<comment type="function">
    <text evidence="2 5">Aminotransferase involved in the formation of the rare amino acid 3-methylarginine (MeArg), which is used as a potent antibiotic against the closely related soybean pathogen P.syringae pv. glycinea (PubMed:20190091). Probably catalyzes transamination from the donor L-aspartate to 5-guanidino-3-methyl-2-oxopentanoic acid, generating 3-methylarginine (Probable).</text>
</comment>
<comment type="catalytic activity">
    <reaction evidence="5">
        <text>(3R)-5-guanidino-3-methyl-2-oxopentanoate + L-aspartate = (3R)-3-methyl-L-arginine + oxaloacetate</text>
        <dbReference type="Rhea" id="RHEA:78823"/>
        <dbReference type="ChEBI" id="CHEBI:16452"/>
        <dbReference type="ChEBI" id="CHEBI:29991"/>
        <dbReference type="ChEBI" id="CHEBI:229580"/>
        <dbReference type="ChEBI" id="CHEBI:229593"/>
        <dbReference type="EC" id="2.6.1.126"/>
    </reaction>
    <physiologicalReaction direction="left-to-right" evidence="5">
        <dbReference type="Rhea" id="RHEA:78824"/>
    </physiologicalReaction>
</comment>
<comment type="cofactor">
    <cofactor evidence="1">
        <name>pyridoxal 5'-phosphate</name>
        <dbReference type="ChEBI" id="CHEBI:597326"/>
    </cofactor>
</comment>
<comment type="pathway">
    <text evidence="5">Antibiotic biosynthesis.</text>
</comment>
<comment type="similarity">
    <text evidence="4">Belongs to the class-I pyridoxal-phosphate-dependent aminotransferase family.</text>
</comment>
<evidence type="ECO:0000250" key="1">
    <source>
        <dbReference type="UniProtKB" id="O84395"/>
    </source>
</evidence>
<evidence type="ECO:0000269" key="2">
    <source>
    </source>
</evidence>
<evidence type="ECO:0000303" key="3">
    <source>
    </source>
</evidence>
<evidence type="ECO:0000305" key="4"/>
<evidence type="ECO:0000305" key="5">
    <source>
    </source>
</evidence>
<proteinExistence type="inferred from homology"/>